<feature type="signal peptide" evidence="9 10 22 23 24 32">
    <location>
        <begin position="1"/>
        <end position="24"/>
    </location>
</feature>
<feature type="chain" id="PRO_0000034225" description="Protein disulfide-isomerase A3">
    <location>
        <begin position="25"/>
        <end position="505"/>
    </location>
</feature>
<feature type="domain" description="Thioredoxin 1" evidence="4">
    <location>
        <begin position="25"/>
        <end position="133"/>
    </location>
</feature>
<feature type="domain" description="Thioredoxin 2" evidence="4">
    <location>
        <begin position="343"/>
        <end position="485"/>
    </location>
</feature>
<feature type="region of interest" description="Disordered" evidence="5">
    <location>
        <begin position="484"/>
        <end position="505"/>
    </location>
</feature>
<feature type="short sequence motif" description="Prevents secretion from ER" evidence="2">
    <location>
        <begin position="502"/>
        <end position="505"/>
    </location>
</feature>
<feature type="compositionally biased region" description="Basic and acidic residues" evidence="5">
    <location>
        <begin position="491"/>
        <end position="505"/>
    </location>
</feature>
<feature type="active site" description="Nucleophile" evidence="6 11 15">
    <location>
        <position position="57"/>
    </location>
</feature>
<feature type="active site" description="Nucleophile" evidence="6 11 15">
    <location>
        <position position="60"/>
    </location>
</feature>
<feature type="active site" description="Nucleophile" evidence="15 20 27 29">
    <location>
        <position position="406"/>
    </location>
</feature>
<feature type="active site" description="Nucleophile" evidence="15 20 27 29">
    <location>
        <position position="409"/>
    </location>
</feature>
<feature type="site" description="Contributes to redox potential value" evidence="1">
    <location>
        <position position="58"/>
    </location>
</feature>
<feature type="site" description="Contributes to redox potential value" evidence="1">
    <location>
        <position position="59"/>
    </location>
</feature>
<feature type="site" description="Lowers pKa of C-terminal Cys of first active site" evidence="1">
    <location>
        <position position="119"/>
    </location>
</feature>
<feature type="site" description="Contributes to redox potential value" evidence="1">
    <location>
        <position position="407"/>
    </location>
</feature>
<feature type="site" description="Contributes to redox potential value" evidence="1">
    <location>
        <position position="408"/>
    </location>
</feature>
<feature type="site" description="Lowers pKa of C-terminal Cys of second active site" evidence="1">
    <location>
        <position position="471"/>
    </location>
</feature>
<feature type="modified residue" description="N6-methyllysine" evidence="30">
    <location>
        <position position="61"/>
    </location>
</feature>
<feature type="modified residue" description="N6-succinyllysine" evidence="3">
    <location>
        <position position="129"/>
    </location>
</feature>
<feature type="modified residue" description="N6-acetyllysine" evidence="3">
    <location>
        <position position="152"/>
    </location>
</feature>
<feature type="modified residue" description="N6-succinyllysine" evidence="3">
    <location>
        <position position="218"/>
    </location>
</feature>
<feature type="modified residue" description="N6-acetyllysine" evidence="3">
    <location>
        <position position="252"/>
    </location>
</feature>
<feature type="modified residue" description="Phosphothreonine" evidence="31">
    <location>
        <position position="319"/>
    </location>
</feature>
<feature type="modified residue" description="N6-acetyllysine" evidence="3">
    <location>
        <position position="362"/>
    </location>
</feature>
<feature type="modified residue" description="N6-acetyllysine" evidence="3">
    <location>
        <position position="494"/>
    </location>
</feature>
<feature type="disulfide bond" description="Redox-active; reversible" evidence="4 11">
    <location>
        <begin position="57"/>
        <end position="60"/>
    </location>
</feature>
<feature type="disulfide bond" description="Interchain (with C-115 in TAPBP); in linked form; reversible" evidence="6 11 15">
    <location>
        <position position="57"/>
    </location>
</feature>
<feature type="disulfide bond" evidence="15 20 21 27 28 29">
    <location>
        <begin position="85"/>
        <end position="92"/>
    </location>
</feature>
<feature type="disulfide bond" description="Redox-active" evidence="4 15 20 21 27 28 29">
    <location>
        <begin position="406"/>
        <end position="409"/>
    </location>
</feature>
<feature type="sequence variant" id="VAR_020027" description="In dbSNP:rs6413485.">
    <original>K</original>
    <variation>R</variation>
    <location>
        <position position="415"/>
    </location>
</feature>
<feature type="mutagenesis site" description="No loss of activity. No loss of activity; when associated with A-406." evidence="24">
    <original>C</original>
    <variation>A</variation>
    <location>
        <position position="57"/>
    </location>
</feature>
<feature type="mutagenesis site" description="Activity changed to serine protease." evidence="24">
    <original>C</original>
    <variation>S</variation>
    <location>
        <position position="57"/>
    </location>
</feature>
<feature type="mutagenesis site" description="Trapped via disulfide bond with TAPBP." evidence="6">
    <original>C</original>
    <variation>A</variation>
    <location>
        <position position="60"/>
    </location>
</feature>
<feature type="mutagenesis site" description="Activity changed to serine protease; when associated with S-409." evidence="24">
    <original>C</original>
    <variation>S</variation>
    <location>
        <position position="60"/>
    </location>
</feature>
<feature type="mutagenesis site" description="No loss of activity. No loss of activity; when associated with A-57." evidence="24">
    <original>C</original>
    <variation>A</variation>
    <location>
        <position position="406"/>
    </location>
</feature>
<feature type="mutagenesis site" description="Activity changed to serine protease." evidence="24">
    <original>C</original>
    <variation>S</variation>
    <location>
        <position position="406"/>
    </location>
</feature>
<feature type="mutagenesis site" description="No effect on disulfide bond with TAPBP." evidence="6">
    <original>C</original>
    <variation>A</variation>
    <location>
        <position position="409"/>
    </location>
</feature>
<feature type="mutagenesis site" description="Activity changed to serine protease; when associated with S-60." evidence="24">
    <original>C</original>
    <variation>S</variation>
    <location>
        <position position="409"/>
    </location>
</feature>
<feature type="sequence conflict" description="In Ref. 6; BAA11928." evidence="25" ref="6">
    <original>A</original>
    <variation>G</variation>
    <location>
        <position position="19"/>
    </location>
</feature>
<feature type="sequence conflict" description="In Ref. 6; BAA11928." evidence="25" ref="6">
    <original>A</original>
    <variation>V</variation>
    <location>
        <position position="22"/>
    </location>
</feature>
<feature type="sequence conflict" description="In Ref. 1; BAA03759." evidence="25" ref="1">
    <original>D</original>
    <variation>Y</variation>
    <location>
        <position position="217"/>
    </location>
</feature>
<feature type="sequence conflict" description="In Ref. 4; CAA89996." evidence="25" ref="4">
    <original>Q</original>
    <variation>P</variation>
    <location>
        <position position="225"/>
    </location>
</feature>
<feature type="sequence conflict" description="In Ref. 4; CAA89996." evidence="25" ref="4">
    <original>E</original>
    <variation>G</variation>
    <location>
        <position position="238"/>
    </location>
</feature>
<feature type="sequence conflict" description="In Ref. 1; BAA03759 and 5; AAC51518." evidence="25" ref="1 5">
    <original>N</original>
    <variation>D</variation>
    <location>
        <position position="272"/>
    </location>
</feature>
<feature type="sequence conflict" description="In Ref. 1; BAA03759." evidence="25" ref="1">
    <original>D</original>
    <variation>G</variation>
    <location>
        <position position="355"/>
    </location>
</feature>
<feature type="sequence conflict" description="In Ref. 1; BAA03759." evidence="25" ref="1">
    <original>D</original>
    <variation>G</variation>
    <location>
        <position position="358"/>
    </location>
</feature>
<feature type="sequence conflict" description="In Ref. 1; BAA03759." evidence="25" ref="1">
    <original>E</original>
    <variation>D</variation>
    <location>
        <position position="368"/>
    </location>
</feature>
<feature type="strand" evidence="33">
    <location>
        <begin position="27"/>
        <end position="29"/>
    </location>
</feature>
<feature type="turn" evidence="35">
    <location>
        <begin position="32"/>
        <end position="34"/>
    </location>
</feature>
<feature type="helix" evidence="35">
    <location>
        <begin position="35"/>
        <end position="38"/>
    </location>
</feature>
<feature type="helix" evidence="33">
    <location>
        <begin position="39"/>
        <end position="41"/>
    </location>
</feature>
<feature type="strand" evidence="35">
    <location>
        <begin position="43"/>
        <end position="53"/>
    </location>
</feature>
<feature type="helix" evidence="35">
    <location>
        <begin position="58"/>
        <end position="73"/>
    </location>
</feature>
<feature type="turn" evidence="35">
    <location>
        <begin position="74"/>
        <end position="77"/>
    </location>
</feature>
<feature type="strand" evidence="35">
    <location>
        <begin position="80"/>
        <end position="84"/>
    </location>
</feature>
<feature type="turn" evidence="35">
    <location>
        <begin position="85"/>
        <end position="87"/>
    </location>
</feature>
<feature type="helix" evidence="35">
    <location>
        <begin position="89"/>
        <end position="94"/>
    </location>
</feature>
<feature type="strand" evidence="35">
    <location>
        <begin position="99"/>
        <end position="107"/>
    </location>
</feature>
<feature type="strand" evidence="35">
    <location>
        <begin position="110"/>
        <end position="114"/>
    </location>
</feature>
<feature type="helix" evidence="35">
    <location>
        <begin position="121"/>
        <end position="131"/>
    </location>
</feature>
<feature type="strand" evidence="34">
    <location>
        <begin position="136"/>
        <end position="138"/>
    </location>
</feature>
<feature type="helix" evidence="34">
    <location>
        <begin position="142"/>
        <end position="149"/>
    </location>
</feature>
<feature type="strand" evidence="34">
    <location>
        <begin position="151"/>
        <end position="153"/>
    </location>
</feature>
<feature type="strand" evidence="34">
    <location>
        <begin position="155"/>
        <end position="161"/>
    </location>
</feature>
<feature type="helix" evidence="34">
    <location>
        <begin position="166"/>
        <end position="177"/>
    </location>
</feature>
<feature type="turn" evidence="34">
    <location>
        <begin position="178"/>
        <end position="181"/>
    </location>
</feature>
<feature type="strand" evidence="34">
    <location>
        <begin position="182"/>
        <end position="187"/>
    </location>
</feature>
<feature type="helix" evidence="34">
    <location>
        <begin position="190"/>
        <end position="196"/>
    </location>
</feature>
<feature type="strand" evidence="34">
    <location>
        <begin position="198"/>
        <end position="206"/>
    </location>
</feature>
<feature type="helix" evidence="34">
    <location>
        <begin position="209"/>
        <end position="211"/>
    </location>
</feature>
<feature type="strand" evidence="34">
    <location>
        <begin position="218"/>
        <end position="221"/>
    </location>
</feature>
<feature type="helix" evidence="34">
    <location>
        <begin position="229"/>
        <end position="239"/>
    </location>
</feature>
<feature type="turn" evidence="35">
    <location>
        <begin position="240"/>
        <end position="243"/>
    </location>
</feature>
<feature type="turn" evidence="34">
    <location>
        <begin position="249"/>
        <end position="251"/>
    </location>
</feature>
<feature type="helix" evidence="34">
    <location>
        <begin position="252"/>
        <end position="255"/>
    </location>
</feature>
<feature type="strand" evidence="34">
    <location>
        <begin position="256"/>
        <end position="265"/>
    </location>
</feature>
<feature type="turn" evidence="34">
    <location>
        <begin position="269"/>
        <end position="271"/>
    </location>
</feature>
<feature type="helix" evidence="34">
    <location>
        <begin position="273"/>
        <end position="292"/>
    </location>
</feature>
<feature type="strand" evidence="34">
    <location>
        <begin position="298"/>
        <end position="303"/>
    </location>
</feature>
<feature type="turn" evidence="34">
    <location>
        <begin position="304"/>
        <end position="307"/>
    </location>
</feature>
<feature type="helix" evidence="34">
    <location>
        <begin position="308"/>
        <end position="311"/>
    </location>
</feature>
<feature type="helix" evidence="34">
    <location>
        <begin position="312"/>
        <end position="314"/>
    </location>
</feature>
<feature type="strand" evidence="36">
    <location>
        <begin position="321"/>
        <end position="323"/>
    </location>
</feature>
<feature type="strand" evidence="34">
    <location>
        <begin position="325"/>
        <end position="329"/>
    </location>
</feature>
<feature type="strand" evidence="35">
    <location>
        <begin position="331"/>
        <end position="333"/>
    </location>
</feature>
<feature type="strand" evidence="34">
    <location>
        <begin position="335"/>
        <end position="337"/>
    </location>
</feature>
<feature type="helix" evidence="34">
    <location>
        <begin position="347"/>
        <end position="358"/>
    </location>
</feature>
<feature type="strand" evidence="35">
    <location>
        <begin position="376"/>
        <end position="381"/>
    </location>
</feature>
<feature type="turn" evidence="35">
    <location>
        <begin position="383"/>
        <end position="385"/>
    </location>
</feature>
<feature type="helix" evidence="35">
    <location>
        <begin position="386"/>
        <end position="390"/>
    </location>
</feature>
<feature type="strand" evidence="35">
    <location>
        <begin position="396"/>
        <end position="402"/>
    </location>
</feature>
<feature type="helix" evidence="35">
    <location>
        <begin position="407"/>
        <end position="422"/>
    </location>
</feature>
<feature type="turn" evidence="35">
    <location>
        <begin position="423"/>
        <end position="425"/>
    </location>
</feature>
<feature type="strand" evidence="35">
    <location>
        <begin position="427"/>
        <end position="435"/>
    </location>
</feature>
<feature type="turn" evidence="36">
    <location>
        <begin position="436"/>
        <end position="438"/>
    </location>
</feature>
<feature type="strand" evidence="35">
    <location>
        <begin position="449"/>
        <end position="456"/>
    </location>
</feature>
<feature type="helix" evidence="35">
    <location>
        <begin position="473"/>
        <end position="483"/>
    </location>
</feature>
<sequence>MRLRRLALFPGVALLLAAARLAAASDVLELTDDNFESRISDTGSAGLMLVEFFAPWCGHCKRLAPEYEAAATRLKGIVPLAKVDCTANTNTCNKYGVSGYPTLKIFRDGEEAGAYDGPRTADGIVSHLKKQAGPASVPLRTEEEFKKFISDKDASIVGFFDDSFSEAHSEFLKAASNLRDNYRFAHTNVESLVNEYDDNGEGIILFRPSHLTNKFEDKTVAYTEQKMTSGKIKKFIQENIFGICPHMTEDNKDLIQGKDLLIAYYDVDYEKNAKGSNYWRNRVMMVAKKFLDAGHKLNFAVASRKTFSHELSDFGLESTAGEIPVVAIRTAKGEKFVMQEEFSRDGKALERFLQDYFDGNLKRYLKSEPIPESNDGPVKVVVAENFDEIVNNENKDVLIEFYAPWCGHCKNLEPKYKELGEKLSKDPNIVIAKMDATANDVPSPYEVRGFPTIYFSPANKKLNPKKYEGGRELSDFISYLQREATNPPVIQEEKPKKKKKAQEDL</sequence>
<accession>P30101</accession>
<accession>Q13453</accession>
<accession>Q14255</accession>
<accession>Q8IYF8</accession>
<accession>Q9UMU7</accession>
<protein>
    <recommendedName>
        <fullName>Protein disulfide-isomerase A3</fullName>
        <ecNumber evidence="19 22">5.3.4.1</ecNumber>
    </recommendedName>
    <alternativeName>
        <fullName>58 kDa glucose-regulated protein</fullName>
    </alternativeName>
    <alternativeName>
        <fullName>58 kDa microsomal protein</fullName>
        <shortName>p58</shortName>
    </alternativeName>
    <alternativeName>
        <fullName>Disulfide isomerase ER-60</fullName>
    </alternativeName>
    <alternativeName>
        <fullName>Endoplasmic reticulum resident protein 57</fullName>
        <shortName>ER protein 57</shortName>
        <shortName>ERp57</shortName>
    </alternativeName>
    <alternativeName>
        <fullName>Endoplasmic reticulum resident protein 60</fullName>
        <shortName>ER protein 60</shortName>
        <shortName>ERp60</shortName>
    </alternativeName>
</protein>
<keyword id="KW-0002">3D-structure</keyword>
<keyword id="KW-0007">Acetylation</keyword>
<keyword id="KW-1064">Adaptive immunity</keyword>
<keyword id="KW-0903">Direct protein sequencing</keyword>
<keyword id="KW-1015">Disulfide bond</keyword>
<keyword id="KW-0256">Endoplasmic reticulum</keyword>
<keyword id="KW-0391">Immunity</keyword>
<keyword id="KW-0413">Isomerase</keyword>
<keyword id="KW-0488">Methylation</keyword>
<keyword id="KW-0597">Phosphoprotein</keyword>
<keyword id="KW-1267">Proteomics identification</keyword>
<keyword id="KW-0676">Redox-active center</keyword>
<keyword id="KW-1185">Reference proteome</keyword>
<keyword id="KW-0677">Repeat</keyword>
<keyword id="KW-0732">Signal</keyword>
<name>PDIA3_HUMAN</name>
<comment type="function">
    <text evidence="6 11 19 20 21 22">Protein disulfide isomerase that catalyzes the formation, isomerization, and reduction or oxidation of disulfide bonds in client proteins and functions as a protein folding chaperone (PubMed:11825568, PubMed:16193070, PubMed:27897272, PubMed:36104323, PubMed:7487104). Core component of the major histocompatibility complex class I (MHC I) peptide loading complex where it functions as an essential folding chaperone for TAPBP. Through TAPBP, assists the dynamic assembly of the MHC I complex with high affinity antigens in the endoplasmic reticulum. Therefore, plays a crucial role in the presentation of antigens to cytotoxic T cells in adaptive immunity (PubMed:35948544, PubMed:36104323).</text>
</comment>
<comment type="catalytic activity">
    <reaction evidence="19 22">
        <text>Catalyzes the rearrangement of -S-S- bonds in proteins.</text>
        <dbReference type="EC" id="5.3.4.1"/>
    </reaction>
</comment>
<comment type="activity regulation">
    <text evidence="19">Association with calcitriol does not affect its enzymatic activity.</text>
</comment>
<comment type="subunit">
    <text evidence="3 12 13 15 17 20 21">Part of the major histocompatibility complex class I (MHC I) peptide loading complex composed of TAP1, TAP2, B2M, MHC heavy chain, TAPBP, PDIA3, and CALR (PubMed:19119025, PubMed:35948544, PubMed:36104323). Interacts with ERP27 and CANX (PubMed:16905107, PubMed:16940051). Interacts with SERPINA2 and with the S and Z variants of SERPINA1 (PubMed:23826168). Interacts with ATP2A2 (By similarity).</text>
</comment>
<comment type="interaction">
    <interactant intactId="EBI-979862">
        <id>P30101</id>
    </interactant>
    <interactant intactId="EBI-77613">
        <id>P05067</id>
        <label>APP</label>
    </interactant>
    <organismsDiffer>false</organismsDiffer>
    <experiments>6</experiments>
</comment>
<comment type="interaction">
    <interactant intactId="EBI-979862">
        <id>P30101</id>
    </interactant>
    <interactant intactId="EBI-349854">
        <id>P13569</id>
        <label>CFTR</label>
    </interactant>
    <organismsDiffer>false</organismsDiffer>
    <experiments>12</experiments>
</comment>
<comment type="interaction">
    <interactant intactId="EBI-979862">
        <id>P30101</id>
    </interactant>
    <interactant intactId="EBI-1104674">
        <id>P10909</id>
        <label>CLU</label>
    </interactant>
    <organismsDiffer>false</organismsDiffer>
    <experiments>2</experiments>
</comment>
<comment type="interaction">
    <interactant intactId="EBI-979862">
        <id>P30101</id>
    </interactant>
    <interactant intactId="EBI-2564539">
        <id>Q96HE7</id>
        <label>ERO1A</label>
    </interactant>
    <organismsDiffer>false</organismsDiffer>
    <experiments>3</experiments>
</comment>
<comment type="interaction">
    <interactant intactId="EBI-979862">
        <id>P30101</id>
    </interactant>
    <interactant intactId="EBI-2806988">
        <id>Q86YB8</id>
        <label>ERO1B</label>
    </interactant>
    <organismsDiffer>false</organismsDiffer>
    <experiments>2</experiments>
</comment>
<comment type="interaction">
    <interactant intactId="EBI-979862">
        <id>P30101</id>
    </interactant>
    <interactant intactId="EBI-979862">
        <id>P30101</id>
        <label>PDIA3</label>
    </interactant>
    <organismsDiffer>false</organismsDiffer>
    <experiments>2</experiments>
</comment>
<comment type="interaction">
    <interactant intactId="EBI-979862">
        <id>P30101</id>
    </interactant>
    <interactant intactId="EBI-2211957">
        <id>Q13162</id>
        <label>PRDX4</label>
    </interactant>
    <organismsDiffer>false</organismsDiffer>
    <experiments>2</experiments>
</comment>
<comment type="interaction">
    <interactant intactId="EBI-979862">
        <id>P30101</id>
    </interactant>
    <interactant intactId="EBI-448878">
        <id>Q13586</id>
        <label>STIM1</label>
    </interactant>
    <organismsDiffer>false</organismsDiffer>
    <experiments>3</experiments>
</comment>
<comment type="interaction">
    <interactant intactId="EBI-979862">
        <id>P30101</id>
    </interactant>
    <interactant intactId="EBI-747259">
        <id>Q03518</id>
        <label>TAP1</label>
    </interactant>
    <organismsDiffer>false</organismsDiffer>
    <experiments>5</experiments>
</comment>
<comment type="interaction">
    <interactant intactId="EBI-979862">
        <id>P30101</id>
    </interactant>
    <interactant intactId="EBI-916742">
        <id>P18418</id>
        <label>Calr</label>
    </interactant>
    <organismsDiffer>true</organismsDiffer>
    <experiments>2</experiments>
</comment>
<comment type="interaction">
    <interactant intactId="EBI-979862">
        <id>P30101</id>
    </interactant>
    <interactant intactId="EBI-15596385">
        <id>P24643</id>
        <label>CANX</label>
    </interactant>
    <organismsDiffer>true</organismsDiffer>
    <experiments>3</experiments>
</comment>
<comment type="subcellular location">
    <subcellularLocation>
        <location evidence="17">Endoplasmic reticulum</location>
    </subcellularLocation>
    <subcellularLocation>
        <location evidence="2">Endoplasmic reticulum lumen</location>
    </subcellularLocation>
    <subcellularLocation>
        <location evidence="8 14">Melanosome</location>
    </subcellularLocation>
    <text evidence="8">Identified by mass spectrometry in melanosome fractions from stage I to stage IV (PubMed:12643545).</text>
</comment>
<comment type="tissue specificity">
    <text evidence="16 18">Detected in the flagellum and head region of spermatozoa (at protein level) (PubMed:20400973). Expressed in liver, stomach and colon (at protein level). Expressed in gastric parietal cells and chief cells (at protein level) (PubMed:24188822).</text>
</comment>
<comment type="PTM">
    <text evidence="6">Within the major histocompatibility complex class I (MHC I) peptide loading complex forms reversible disulfide-linked heterodimers with TAPBP as part of its protein folding chaperone activity. This is essential to assist the dynamic assembly of the MHC I complex with high affinity antigens in the endoplasmic reticulum.</text>
</comment>
<comment type="PTM">
    <text evidence="3">Phosphorylated.</text>
</comment>
<comment type="mass spectrometry"/>
<comment type="similarity">
    <text evidence="25">Belongs to the protein disulfide isomerase family.</text>
</comment>
<comment type="caution">
    <text evidence="25">Was originally thought to be a phosphatidylinositol 4,5-bisphosphate phosphodiesterase type I (phospholipase C-alpha).</text>
</comment>
<proteinExistence type="evidence at protein level"/>
<evidence type="ECO:0000250" key="1"/>
<evidence type="ECO:0000250" key="2">
    <source>
        <dbReference type="UniProtKB" id="P11598"/>
    </source>
</evidence>
<evidence type="ECO:0000250" key="3">
    <source>
        <dbReference type="UniProtKB" id="P27773"/>
    </source>
</evidence>
<evidence type="ECO:0000255" key="4">
    <source>
        <dbReference type="PROSITE-ProRule" id="PRU00691"/>
    </source>
</evidence>
<evidence type="ECO:0000256" key="5">
    <source>
        <dbReference type="SAM" id="MobiDB-lite"/>
    </source>
</evidence>
<evidence type="ECO:0000269" key="6">
    <source>
    </source>
</evidence>
<evidence type="ECO:0000269" key="7">
    <source>
    </source>
</evidence>
<evidence type="ECO:0000269" key="8">
    <source>
    </source>
</evidence>
<evidence type="ECO:0000269" key="9">
    <source>
    </source>
</evidence>
<evidence type="ECO:0000269" key="10">
    <source>
    </source>
</evidence>
<evidence type="ECO:0000269" key="11">
    <source>
    </source>
</evidence>
<evidence type="ECO:0000269" key="12">
    <source>
    </source>
</evidence>
<evidence type="ECO:0000269" key="13">
    <source>
    </source>
</evidence>
<evidence type="ECO:0000269" key="14">
    <source>
    </source>
</evidence>
<evidence type="ECO:0000269" key="15">
    <source>
    </source>
</evidence>
<evidence type="ECO:0000269" key="16">
    <source>
    </source>
</evidence>
<evidence type="ECO:0000269" key="17">
    <source>
    </source>
</evidence>
<evidence type="ECO:0000269" key="18">
    <source>
    </source>
</evidence>
<evidence type="ECO:0000269" key="19">
    <source>
    </source>
</evidence>
<evidence type="ECO:0000269" key="20">
    <source>
    </source>
</evidence>
<evidence type="ECO:0000269" key="21">
    <source>
    </source>
</evidence>
<evidence type="ECO:0000269" key="22">
    <source>
    </source>
</evidence>
<evidence type="ECO:0000269" key="23">
    <source>
    </source>
</evidence>
<evidence type="ECO:0000269" key="24">
    <source>
    </source>
</evidence>
<evidence type="ECO:0000305" key="25"/>
<evidence type="ECO:0000312" key="26">
    <source>
        <dbReference type="HGNC" id="HGNC:4606"/>
    </source>
</evidence>
<evidence type="ECO:0007744" key="27">
    <source>
        <dbReference type="PDB" id="3F8U"/>
    </source>
</evidence>
<evidence type="ECO:0007744" key="28">
    <source>
        <dbReference type="PDB" id="7QNG"/>
    </source>
</evidence>
<evidence type="ECO:0007744" key="29">
    <source>
        <dbReference type="PDB" id="7QPD"/>
    </source>
</evidence>
<evidence type="ECO:0007744" key="30">
    <source>
    </source>
</evidence>
<evidence type="ECO:0007744" key="31">
    <source>
    </source>
</evidence>
<evidence type="ECO:0007744" key="32">
    <source>
    </source>
</evidence>
<evidence type="ECO:0007829" key="33">
    <source>
        <dbReference type="PDB" id="2ALB"/>
    </source>
</evidence>
<evidence type="ECO:0007829" key="34">
    <source>
        <dbReference type="PDB" id="2H8L"/>
    </source>
</evidence>
<evidence type="ECO:0007829" key="35">
    <source>
        <dbReference type="PDB" id="3F8U"/>
    </source>
</evidence>
<evidence type="ECO:0007829" key="36">
    <source>
        <dbReference type="PDB" id="7QNG"/>
    </source>
</evidence>
<dbReference type="EC" id="5.3.4.1" evidence="19 22"/>
<dbReference type="EMBL" id="D16234">
    <property type="protein sequence ID" value="BAA03759.1"/>
    <property type="molecule type" value="mRNA"/>
</dbReference>
<dbReference type="EMBL" id="U42068">
    <property type="protein sequence ID" value="AAC50331.1"/>
    <property type="molecule type" value="mRNA"/>
</dbReference>
<dbReference type="EMBL" id="Z49835">
    <property type="protein sequence ID" value="CAA89996.1"/>
    <property type="molecule type" value="mRNA"/>
</dbReference>
<dbReference type="EMBL" id="U75885">
    <property type="protein sequence ID" value="AAC51518.1"/>
    <property type="molecule type" value="Genomic_DNA"/>
</dbReference>
<dbReference type="EMBL" id="U75875">
    <property type="protein sequence ID" value="AAC51518.1"/>
    <property type="status" value="JOINED"/>
    <property type="molecule type" value="Genomic_DNA"/>
</dbReference>
<dbReference type="EMBL" id="U75876">
    <property type="protein sequence ID" value="AAC51518.1"/>
    <property type="status" value="JOINED"/>
    <property type="molecule type" value="Genomic_DNA"/>
</dbReference>
<dbReference type="EMBL" id="U75877">
    <property type="protein sequence ID" value="AAC51518.1"/>
    <property type="status" value="JOINED"/>
    <property type="molecule type" value="Genomic_DNA"/>
</dbReference>
<dbReference type="EMBL" id="U75878">
    <property type="protein sequence ID" value="AAC51518.1"/>
    <property type="status" value="JOINED"/>
    <property type="molecule type" value="Genomic_DNA"/>
</dbReference>
<dbReference type="EMBL" id="U75879">
    <property type="protein sequence ID" value="AAC51518.1"/>
    <property type="status" value="JOINED"/>
    <property type="molecule type" value="Genomic_DNA"/>
</dbReference>
<dbReference type="EMBL" id="U75880">
    <property type="protein sequence ID" value="AAC51518.1"/>
    <property type="status" value="JOINED"/>
    <property type="molecule type" value="Genomic_DNA"/>
</dbReference>
<dbReference type="EMBL" id="U75881">
    <property type="protein sequence ID" value="AAC51518.1"/>
    <property type="status" value="JOINED"/>
    <property type="molecule type" value="Genomic_DNA"/>
</dbReference>
<dbReference type="EMBL" id="U75882">
    <property type="protein sequence ID" value="AAC51518.1"/>
    <property type="status" value="JOINED"/>
    <property type="molecule type" value="Genomic_DNA"/>
</dbReference>
<dbReference type="EMBL" id="U75883">
    <property type="protein sequence ID" value="AAC51518.1"/>
    <property type="status" value="JOINED"/>
    <property type="molecule type" value="Genomic_DNA"/>
</dbReference>
<dbReference type="EMBL" id="U75884">
    <property type="protein sequence ID" value="AAC51518.1"/>
    <property type="status" value="JOINED"/>
    <property type="molecule type" value="Genomic_DNA"/>
</dbReference>
<dbReference type="EMBL" id="D83485">
    <property type="protein sequence ID" value="BAA11928.1"/>
    <property type="molecule type" value="mRNA"/>
</dbReference>
<dbReference type="EMBL" id="BC014433">
    <property type="protein sequence ID" value="AAH14433.1"/>
    <property type="molecule type" value="mRNA"/>
</dbReference>
<dbReference type="EMBL" id="BC036000">
    <property type="protein sequence ID" value="AAH36000.4"/>
    <property type="molecule type" value="mRNA"/>
</dbReference>
<dbReference type="EMBL" id="BC071878">
    <property type="protein sequence ID" value="AAH71878.1"/>
    <property type="molecule type" value="mRNA"/>
</dbReference>
<dbReference type="CCDS" id="CCDS10101.1"/>
<dbReference type="PIR" id="JC5704">
    <property type="entry name" value="JC5704"/>
</dbReference>
<dbReference type="PIR" id="S55507">
    <property type="entry name" value="S55507"/>
</dbReference>
<dbReference type="PIR" id="S63994">
    <property type="entry name" value="S63994"/>
</dbReference>
<dbReference type="PIR" id="S68363">
    <property type="entry name" value="S68363"/>
</dbReference>
<dbReference type="RefSeq" id="NP_005304.3">
    <property type="nucleotide sequence ID" value="NM_005313.4"/>
</dbReference>
<dbReference type="PDB" id="2ALB">
    <property type="method" value="NMR"/>
    <property type="chains" value="A=25-137"/>
</dbReference>
<dbReference type="PDB" id="2DMM">
    <property type="method" value="NMR"/>
    <property type="chains" value="A=357-485"/>
</dbReference>
<dbReference type="PDB" id="2H8L">
    <property type="method" value="X-ray"/>
    <property type="resolution" value="2.00 A"/>
    <property type="chains" value="A/B/C=134-376"/>
</dbReference>
<dbReference type="PDB" id="3F8U">
    <property type="method" value="X-ray"/>
    <property type="resolution" value="2.60 A"/>
    <property type="chains" value="A/C=25-505"/>
</dbReference>
<dbReference type="PDB" id="6ENY">
    <property type="method" value="EM"/>
    <property type="resolution" value="5.80 A"/>
    <property type="chains" value="D=25-505"/>
</dbReference>
<dbReference type="PDB" id="7QNG">
    <property type="method" value="X-ray"/>
    <property type="resolution" value="2.70 A"/>
    <property type="chains" value="B=1-505"/>
</dbReference>
<dbReference type="PDB" id="7QPD">
    <property type="method" value="EM"/>
    <property type="resolution" value="3.73 A"/>
    <property type="chains" value="E=25-505"/>
</dbReference>
<dbReference type="PDBsum" id="2ALB"/>
<dbReference type="PDBsum" id="2DMM"/>
<dbReference type="PDBsum" id="2H8L"/>
<dbReference type="PDBsum" id="3F8U"/>
<dbReference type="PDBsum" id="6ENY"/>
<dbReference type="PDBsum" id="7QNG"/>
<dbReference type="PDBsum" id="7QPD"/>
<dbReference type="BMRB" id="P30101"/>
<dbReference type="EMDB" id="EMD-14119"/>
<dbReference type="EMDB" id="EMD-3906"/>
<dbReference type="SMR" id="P30101"/>
<dbReference type="BioGRID" id="109180">
    <property type="interactions" value="515"/>
</dbReference>
<dbReference type="ComplexPortal" id="CPX-2375">
    <property type="entry name" value="Tapasin-ERp57 complex"/>
</dbReference>
<dbReference type="CORUM" id="P30101"/>
<dbReference type="DIP" id="DIP-29132N"/>
<dbReference type="FunCoup" id="P30101">
    <property type="interactions" value="1977"/>
</dbReference>
<dbReference type="IntAct" id="P30101">
    <property type="interactions" value="185"/>
</dbReference>
<dbReference type="MINT" id="P30101"/>
<dbReference type="STRING" id="9606.ENSP00000300289"/>
<dbReference type="BindingDB" id="P30101"/>
<dbReference type="ChEMBL" id="CHEMBL4296001"/>
<dbReference type="DrugBank" id="DB09130">
    <property type="generic name" value="Copper"/>
</dbReference>
<dbReference type="DrugBank" id="DB01593">
    <property type="generic name" value="Zinc"/>
</dbReference>
<dbReference type="DrugBank" id="DB14487">
    <property type="generic name" value="Zinc acetate"/>
</dbReference>
<dbReference type="DrugBank" id="DB14533">
    <property type="generic name" value="Zinc chloride"/>
</dbReference>
<dbReference type="DrugBank" id="DB14548">
    <property type="generic name" value="Zinc sulfate, unspecified form"/>
</dbReference>
<dbReference type="GuidetoPHARMACOLOGY" id="3293"/>
<dbReference type="TCDB" id="8.A.88.2.7">
    <property type="family name" value="the calciquestrin (casq) family"/>
</dbReference>
<dbReference type="GlyCosmos" id="P30101">
    <property type="glycosylation" value="2 sites, 1 glycan"/>
</dbReference>
<dbReference type="GlyGen" id="P30101">
    <property type="glycosylation" value="9 sites, 2 O-linked glycans (8 sites)"/>
</dbReference>
<dbReference type="iPTMnet" id="P30101"/>
<dbReference type="MetOSite" id="P30101"/>
<dbReference type="PhosphoSitePlus" id="P30101"/>
<dbReference type="SwissPalm" id="P30101"/>
<dbReference type="BioMuta" id="PDIA3"/>
<dbReference type="DMDM" id="2507461"/>
<dbReference type="REPRODUCTION-2DPAGE" id="P30101"/>
<dbReference type="CPTAC" id="CPTAC-421"/>
<dbReference type="CPTAC" id="CPTAC-422"/>
<dbReference type="jPOST" id="P30101"/>
<dbReference type="MassIVE" id="P30101"/>
<dbReference type="PaxDb" id="9606-ENSP00000300289"/>
<dbReference type="PeptideAtlas" id="P30101"/>
<dbReference type="PRIDE" id="P30101"/>
<dbReference type="ProteomicsDB" id="54635"/>
<dbReference type="Pumba" id="P30101"/>
<dbReference type="TopDownProteomics" id="P30101"/>
<dbReference type="Antibodypedia" id="1223">
    <property type="antibodies" value="925 antibodies from 46 providers"/>
</dbReference>
<dbReference type="DNASU" id="2923"/>
<dbReference type="Ensembl" id="ENST00000300289.10">
    <property type="protein sequence ID" value="ENSP00000300289.5"/>
    <property type="gene ID" value="ENSG00000167004.14"/>
</dbReference>
<dbReference type="GeneID" id="2923"/>
<dbReference type="KEGG" id="hsa:2923"/>
<dbReference type="MANE-Select" id="ENST00000300289.10">
    <property type="protein sequence ID" value="ENSP00000300289.5"/>
    <property type="RefSeq nucleotide sequence ID" value="NM_005313.5"/>
    <property type="RefSeq protein sequence ID" value="NP_005304.3"/>
</dbReference>
<dbReference type="AGR" id="HGNC:4606"/>
<dbReference type="CTD" id="2923"/>
<dbReference type="DisGeNET" id="2923"/>
<dbReference type="GeneCards" id="PDIA3"/>
<dbReference type="HGNC" id="HGNC:4606">
    <property type="gene designation" value="PDIA3"/>
</dbReference>
<dbReference type="HPA" id="ENSG00000167004">
    <property type="expression patterns" value="Tissue enhanced (thyroid)"/>
</dbReference>
<dbReference type="MIM" id="602046">
    <property type="type" value="gene"/>
</dbReference>
<dbReference type="neXtProt" id="NX_P30101"/>
<dbReference type="OpenTargets" id="ENSG00000167004"/>
<dbReference type="PharmGKB" id="PA29000"/>
<dbReference type="VEuPathDB" id="HostDB:ENSG00000167004"/>
<dbReference type="eggNOG" id="KOG0190">
    <property type="taxonomic scope" value="Eukaryota"/>
</dbReference>
<dbReference type="GeneTree" id="ENSGT00940000155425"/>
<dbReference type="HOGENOM" id="CLU_025879_6_0_1"/>
<dbReference type="InParanoid" id="P30101"/>
<dbReference type="OMA" id="HRTQDSV"/>
<dbReference type="OrthoDB" id="427280at2759"/>
<dbReference type="PAN-GO" id="P30101">
    <property type="GO annotations" value="5 GO annotations based on evolutionary models"/>
</dbReference>
<dbReference type="PhylomeDB" id="P30101"/>
<dbReference type="TreeFam" id="TF106382"/>
<dbReference type="BRENDA" id="5.3.4.1">
    <property type="organism ID" value="2681"/>
</dbReference>
<dbReference type="PathwayCommons" id="P30101"/>
<dbReference type="Reactome" id="R-HSA-1236974">
    <property type="pathway name" value="ER-Phagosome pathway"/>
</dbReference>
<dbReference type="Reactome" id="R-HSA-901042">
    <property type="pathway name" value="Calnexin/calreticulin cycle"/>
</dbReference>
<dbReference type="Reactome" id="R-HSA-983170">
    <property type="pathway name" value="Antigen Presentation: Folding, assembly and peptide loading of class I MHC"/>
</dbReference>
<dbReference type="SignaLink" id="P30101"/>
<dbReference type="SIGNOR" id="P30101"/>
<dbReference type="BioGRID-ORCS" id="2923">
    <property type="hits" value="32 hits in 1145 CRISPR screens"/>
</dbReference>
<dbReference type="CD-CODE" id="91857CE7">
    <property type="entry name" value="Nucleolus"/>
</dbReference>
<dbReference type="CD-CODE" id="DEE660B4">
    <property type="entry name" value="Stress granule"/>
</dbReference>
<dbReference type="CD-CODE" id="FB4E32DD">
    <property type="entry name" value="Presynaptic clusters and postsynaptic densities"/>
</dbReference>
<dbReference type="ChiTaRS" id="PDIA3">
    <property type="organism name" value="human"/>
</dbReference>
<dbReference type="EvolutionaryTrace" id="P30101"/>
<dbReference type="GenomeRNAi" id="2923"/>
<dbReference type="Pharos" id="P30101">
    <property type="development level" value="Tbio"/>
</dbReference>
<dbReference type="PRO" id="PR:P30101"/>
<dbReference type="Proteomes" id="UP000005640">
    <property type="component" value="Chromosome 15"/>
</dbReference>
<dbReference type="RNAct" id="P30101">
    <property type="molecule type" value="protein"/>
</dbReference>
<dbReference type="Bgee" id="ENSG00000167004">
    <property type="expression patterns" value="Expressed in corpus epididymis and 205 other cell types or tissues"/>
</dbReference>
<dbReference type="ExpressionAtlas" id="P30101">
    <property type="expression patterns" value="baseline and differential"/>
</dbReference>
<dbReference type="GO" id="GO:0009986">
    <property type="term" value="C:cell surface"/>
    <property type="evidence" value="ECO:0000314"/>
    <property type="project" value="MGI"/>
</dbReference>
<dbReference type="GO" id="GO:0005783">
    <property type="term" value="C:endoplasmic reticulum"/>
    <property type="evidence" value="ECO:0000314"/>
    <property type="project" value="UniProtKB"/>
</dbReference>
<dbReference type="GO" id="GO:0005788">
    <property type="term" value="C:endoplasmic reticulum lumen"/>
    <property type="evidence" value="ECO:0000304"/>
    <property type="project" value="Reactome"/>
</dbReference>
<dbReference type="GO" id="GO:0070062">
    <property type="term" value="C:extracellular exosome"/>
    <property type="evidence" value="ECO:0007005"/>
    <property type="project" value="UniProtKB"/>
</dbReference>
<dbReference type="GO" id="GO:0005615">
    <property type="term" value="C:extracellular space"/>
    <property type="evidence" value="ECO:0000314"/>
    <property type="project" value="UniProtKB"/>
</dbReference>
<dbReference type="GO" id="GO:0005925">
    <property type="term" value="C:focal adhesion"/>
    <property type="evidence" value="ECO:0007005"/>
    <property type="project" value="UniProtKB"/>
</dbReference>
<dbReference type="GO" id="GO:0042470">
    <property type="term" value="C:melanosome"/>
    <property type="evidence" value="ECO:0007669"/>
    <property type="project" value="UniProtKB-SubCell"/>
</dbReference>
<dbReference type="GO" id="GO:0042824">
    <property type="term" value="C:MHC class I peptide loading complex"/>
    <property type="evidence" value="ECO:0000314"/>
    <property type="project" value="UniProtKB"/>
</dbReference>
<dbReference type="GO" id="GO:0005634">
    <property type="term" value="C:nucleus"/>
    <property type="evidence" value="ECO:0007005"/>
    <property type="project" value="UniProtKB"/>
</dbReference>
<dbReference type="GO" id="GO:0045335">
    <property type="term" value="C:phagocytic vesicle"/>
    <property type="evidence" value="ECO:0000304"/>
    <property type="project" value="Reactome"/>
</dbReference>
<dbReference type="GO" id="GO:0055038">
    <property type="term" value="C:recycling endosome membrane"/>
    <property type="evidence" value="ECO:0000304"/>
    <property type="project" value="Reactome"/>
</dbReference>
<dbReference type="GO" id="GO:0061779">
    <property type="term" value="C:Tapasin-ERp57 complex"/>
    <property type="evidence" value="ECO:0000353"/>
    <property type="project" value="ComplexPortal"/>
</dbReference>
<dbReference type="GO" id="GO:0004197">
    <property type="term" value="F:cysteine-type endopeptidase activity"/>
    <property type="evidence" value="ECO:0000304"/>
    <property type="project" value="ProtInc"/>
</dbReference>
<dbReference type="GO" id="GO:0015036">
    <property type="term" value="F:disulfide oxidoreductase activity"/>
    <property type="evidence" value="ECO:0000304"/>
    <property type="project" value="ParkinsonsUK-UCL"/>
</dbReference>
<dbReference type="GO" id="GO:0042802">
    <property type="term" value="F:identical protein binding"/>
    <property type="evidence" value="ECO:0000353"/>
    <property type="project" value="IntAct"/>
</dbReference>
<dbReference type="GO" id="GO:0106222">
    <property type="term" value="F:lncRNA binding"/>
    <property type="evidence" value="ECO:0007669"/>
    <property type="project" value="Ensembl"/>
</dbReference>
<dbReference type="GO" id="GO:0004629">
    <property type="term" value="F:phospholipase C activity"/>
    <property type="evidence" value="ECO:0000304"/>
    <property type="project" value="ProtInc"/>
</dbReference>
<dbReference type="GO" id="GO:0003756">
    <property type="term" value="F:protein disulfide isomerase activity"/>
    <property type="evidence" value="ECO:0000318"/>
    <property type="project" value="GO_Central"/>
</dbReference>
<dbReference type="GO" id="GO:0015035">
    <property type="term" value="F:protein-disulfide reductase activity"/>
    <property type="evidence" value="ECO:0000314"/>
    <property type="project" value="UniProtKB"/>
</dbReference>
<dbReference type="GO" id="GO:0003723">
    <property type="term" value="F:RNA binding"/>
    <property type="evidence" value="ECO:0007005"/>
    <property type="project" value="UniProtKB"/>
</dbReference>
<dbReference type="GO" id="GO:0002250">
    <property type="term" value="P:adaptive immune response"/>
    <property type="evidence" value="ECO:0007669"/>
    <property type="project" value="UniProtKB-KW"/>
</dbReference>
<dbReference type="GO" id="GO:0098761">
    <property type="term" value="P:cellular response to interleukin-7"/>
    <property type="evidence" value="ECO:0007669"/>
    <property type="project" value="Ensembl"/>
</dbReference>
<dbReference type="GO" id="GO:0097191">
    <property type="term" value="P:extrinsic apoptotic signaling pathway"/>
    <property type="evidence" value="ECO:0007669"/>
    <property type="project" value="Ensembl"/>
</dbReference>
<dbReference type="GO" id="GO:0002502">
    <property type="term" value="P:peptide antigen assembly with MHC class I protein complex"/>
    <property type="evidence" value="ECO:0000314"/>
    <property type="project" value="ComplexPortal"/>
</dbReference>
<dbReference type="GO" id="GO:0070527">
    <property type="term" value="P:platelet aggregation"/>
    <property type="evidence" value="ECO:0007669"/>
    <property type="project" value="Ensembl"/>
</dbReference>
<dbReference type="GO" id="GO:2001238">
    <property type="term" value="P:positive regulation of extrinsic apoptotic signaling pathway"/>
    <property type="evidence" value="ECO:0007669"/>
    <property type="project" value="Ensembl"/>
</dbReference>
<dbReference type="GO" id="GO:0006457">
    <property type="term" value="P:protein folding"/>
    <property type="evidence" value="ECO:0000318"/>
    <property type="project" value="GO_Central"/>
</dbReference>
<dbReference type="GO" id="GO:0034975">
    <property type="term" value="P:protein folding in endoplasmic reticulum"/>
    <property type="evidence" value="ECO:0000304"/>
    <property type="project" value="ParkinsonsUK-UCL"/>
</dbReference>
<dbReference type="GO" id="GO:0034976">
    <property type="term" value="P:response to endoplasmic reticulum stress"/>
    <property type="evidence" value="ECO:0000318"/>
    <property type="project" value="GO_Central"/>
</dbReference>
<dbReference type="CDD" id="cd02995">
    <property type="entry name" value="PDI_a_PDI_a'_C"/>
    <property type="match status" value="1"/>
</dbReference>
<dbReference type="CDD" id="cd03073">
    <property type="entry name" value="PDI_b'_ERp72_ERp57"/>
    <property type="match status" value="1"/>
</dbReference>
<dbReference type="CDD" id="cd03069">
    <property type="entry name" value="PDI_b_ERp57"/>
    <property type="match status" value="1"/>
</dbReference>
<dbReference type="FunFam" id="3.40.30.10:FF:000045">
    <property type="entry name" value="Disulfide-isomerase A3"/>
    <property type="match status" value="1"/>
</dbReference>
<dbReference type="FunFam" id="3.40.30.10:FF:000054">
    <property type="entry name" value="Disulfide-isomerase A3"/>
    <property type="match status" value="1"/>
</dbReference>
<dbReference type="FunFam" id="3.40.30.10:FF:000077">
    <property type="entry name" value="Protein disulfide-isomerase"/>
    <property type="match status" value="1"/>
</dbReference>
<dbReference type="FunFam" id="3.40.30.10:FF:000017">
    <property type="entry name" value="Protein disulfide-isomerase A4"/>
    <property type="match status" value="1"/>
</dbReference>
<dbReference type="Gene3D" id="3.40.30.10">
    <property type="entry name" value="Glutaredoxin"/>
    <property type="match status" value="4"/>
</dbReference>
<dbReference type="InterPro" id="IPR005788">
    <property type="entry name" value="PDI_thioredoxin-like_dom"/>
</dbReference>
<dbReference type="InterPro" id="IPR041868">
    <property type="entry name" value="PDIA3_PDI_b"/>
</dbReference>
<dbReference type="InterPro" id="IPR005792">
    <property type="entry name" value="Prot_disulphide_isomerase"/>
</dbReference>
<dbReference type="InterPro" id="IPR036249">
    <property type="entry name" value="Thioredoxin-like_sf"/>
</dbReference>
<dbReference type="InterPro" id="IPR017937">
    <property type="entry name" value="Thioredoxin_CS"/>
</dbReference>
<dbReference type="InterPro" id="IPR013766">
    <property type="entry name" value="Thioredoxin_domain"/>
</dbReference>
<dbReference type="NCBIfam" id="TIGR01130">
    <property type="entry name" value="ER_PDI_fam"/>
    <property type="match status" value="1"/>
</dbReference>
<dbReference type="NCBIfam" id="TIGR01126">
    <property type="entry name" value="pdi_dom"/>
    <property type="match status" value="2"/>
</dbReference>
<dbReference type="PANTHER" id="PTHR18929">
    <property type="entry name" value="PROTEIN DISULFIDE ISOMERASE"/>
    <property type="match status" value="1"/>
</dbReference>
<dbReference type="PANTHER" id="PTHR18929:SF132">
    <property type="entry name" value="PROTEIN DISULFIDE-ISOMERASE A3"/>
    <property type="match status" value="1"/>
</dbReference>
<dbReference type="Pfam" id="PF00085">
    <property type="entry name" value="Thioredoxin"/>
    <property type="match status" value="2"/>
</dbReference>
<dbReference type="Pfam" id="PF13848">
    <property type="entry name" value="Thioredoxin_6"/>
    <property type="match status" value="1"/>
</dbReference>
<dbReference type="PRINTS" id="PR00421">
    <property type="entry name" value="THIOREDOXIN"/>
</dbReference>
<dbReference type="SUPFAM" id="SSF52833">
    <property type="entry name" value="Thioredoxin-like"/>
    <property type="match status" value="4"/>
</dbReference>
<dbReference type="PROSITE" id="PS00194">
    <property type="entry name" value="THIOREDOXIN_1"/>
    <property type="match status" value="2"/>
</dbReference>
<dbReference type="PROSITE" id="PS51352">
    <property type="entry name" value="THIOREDOXIN_2"/>
    <property type="match status" value="2"/>
</dbReference>
<reference key="1">
    <citation type="journal article" date="1994" name="Biochem. Biophys. Res. Commun.">
        <title>Molecular cloning and characterization of a cDNA for bovine phospholipase C-alpha: proposal of redesignation of phospholipase C-alpha.</title>
        <authorList>
            <person name="Hirano N."/>
            <person name="Shibasaki F."/>
            <person name="Katoh H."/>
            <person name="Sakai R."/>
            <person name="Tanaka T."/>
            <person name="Nishida J."/>
            <person name="Yazaki Y."/>
            <person name="Takenawa T."/>
            <person name="Hirai H."/>
        </authorList>
    </citation>
    <scope>NUCLEOTIDE SEQUENCE [MRNA]</scope>
</reference>
<reference key="2">
    <citation type="journal article" date="1995" name="Arch. Biochem. Biophys.">
        <title>cDNA cloning and baculovirus expression of the human liver endoplasmic reticulum P58: characterization as a protein disulfide isomerase isoform, but not as a protease or a carnitine acyltransferase.</title>
        <authorList>
            <person name="Bourdi M."/>
            <person name="Demady D."/>
            <person name="Martin J.L."/>
            <person name="Jabbour S.K."/>
            <person name="Martin B.M."/>
            <person name="George J.W."/>
            <person name="Pohl L.R."/>
        </authorList>
    </citation>
    <scope>NUCLEOTIDE SEQUENCE [MRNA]</scope>
    <scope>PROTEIN SEQUENCE OF 25-36 AND 130-144</scope>
    <scope>CATALYTIC ACTIVITY</scope>
    <source>
        <tissue>Liver</tissue>
    </source>
</reference>
<reference key="3">
    <citation type="journal article" date="1996" name="Biochem. J.">
        <title>ERp60 does not substitute for protein disulphide isomerase as the beta-subunit of prolyl 4-hydroxylase.</title>
        <authorList>
            <person name="Koivunen P."/>
            <person name="Helaakoski T."/>
            <person name="Annunen P."/>
            <person name="Veijola J."/>
            <person name="Raeisaenen S."/>
            <person name="Pihlajaniemi T."/>
            <person name="Kivirikko K.I."/>
        </authorList>
    </citation>
    <scope>NUCLEOTIDE SEQUENCE [MRNA]</scope>
    <source>
        <tissue>Heart</tissue>
    </source>
</reference>
<reference key="4">
    <citation type="journal article" date="1996" name="Int. J. Biochem. Cell Biol.">
        <title>Cloning, expression and genomic organization of human placental protein disulfide isomerase (previously identified as phospholipase C alpha).</title>
        <authorList>
            <person name="Charnock-Jones D.S."/>
            <person name="Day K."/>
            <person name="Smith S.K."/>
        </authorList>
    </citation>
    <scope>NUCLEOTIDE SEQUENCE [MRNA]</scope>
    <source>
        <tissue>Placenta</tissue>
    </source>
</reference>
<reference key="5">
    <citation type="journal article" date="1997" name="Genomics">
        <title>Structures of the human gene for the protein disulfide isomerase-related polypeptide ERp60 and a processed gene and assignment of these genes to 15q15 and 1q21.</title>
        <authorList>
            <person name="Koivunen P."/>
            <person name="Horelli-Kuitunen N."/>
            <person name="Helaakoski T."/>
            <person name="Karvonen P."/>
            <person name="Jaakkola M."/>
            <person name="Palotie A."/>
            <person name="Kivirikko K.I."/>
        </authorList>
    </citation>
    <scope>NUCLEOTIDE SEQUENCE [GENOMIC DNA]</scope>
</reference>
<reference key="6">
    <citation type="journal article" date="1997" name="J. Biochem.">
        <title>Functions of characteristic Cys-Gly-His-Cys (CGHC) and Gln-Glu-Asp-Leu (QEDL) motifs of microsomal ER-60 protease.</title>
        <authorList>
            <person name="Urade R."/>
            <person name="Oda T."/>
            <person name="Ito H."/>
            <person name="Moriyama T."/>
            <person name="Utsumi S."/>
            <person name="Kito M."/>
        </authorList>
    </citation>
    <scope>NUCLEOTIDE SEQUENCE [MRNA]</scope>
    <scope>PROTEIN SEQUENCE OF 25-34 AND 504-505</scope>
    <scope>MUTAGENESIS OF CYS-57; CYS-60; CYS-406 AND CYS-409</scope>
    <source>
        <tissue>Liver epithelium</tissue>
    </source>
</reference>
<reference key="7">
    <citation type="journal article" date="2004" name="Genome Res.">
        <title>The status, quality, and expansion of the NIH full-length cDNA project: the Mammalian Gene Collection (MGC).</title>
        <authorList>
            <consortium name="The MGC Project Team"/>
        </authorList>
    </citation>
    <scope>NUCLEOTIDE SEQUENCE [LARGE SCALE MRNA]</scope>
    <source>
        <tissue>Liver</tissue>
        <tissue>Lung</tissue>
        <tissue>Lymph</tissue>
    </source>
</reference>
<reference key="8">
    <citation type="journal article" date="1997" name="Electrophoresis">
        <title>A two-dimensional gel database of human colon carcinoma proteins.</title>
        <authorList>
            <person name="Ji H."/>
            <person name="Reid G.E."/>
            <person name="Moritz R.L."/>
            <person name="Eddes J.S."/>
            <person name="Burgess A.W."/>
            <person name="Simpson R.J."/>
        </authorList>
    </citation>
    <scope>PROTEIN SEQUENCE OF 25-54; 62-75 AND 95-104</scope>
    <source>
        <tissue>Colon carcinoma</tissue>
    </source>
</reference>
<reference key="9">
    <citation type="journal article" date="2003" name="Nat. Biotechnol.">
        <title>Exploring proteomes and analyzing protein processing by mass spectrometric identification of sorted N-terminal peptides.</title>
        <authorList>
            <person name="Gevaert K."/>
            <person name="Goethals M."/>
            <person name="Martens L."/>
            <person name="Van Damme J."/>
            <person name="Staes A."/>
            <person name="Thomas G.R."/>
            <person name="Vandekerckhove J."/>
        </authorList>
    </citation>
    <scope>PROTEIN SEQUENCE OF 25-38</scope>
    <source>
        <tissue>Platelet</tissue>
    </source>
</reference>
<reference key="10">
    <citation type="journal article" date="1992" name="Electrophoresis">
        <title>Human liver protein map: a reference database established by microsequencing and gel comparison.</title>
        <authorList>
            <person name="Hochstrasser D.F."/>
            <person name="Frutiger S."/>
            <person name="Paquet N."/>
            <person name="Bairoch A."/>
            <person name="Ravier F."/>
            <person name="Pasquali C."/>
            <person name="Sanchez J.-C."/>
            <person name="Tissot J.-D."/>
            <person name="Bjellqvist B."/>
            <person name="Vargas R."/>
            <person name="Appel R.D."/>
            <person name="Hughes G.J."/>
        </authorList>
    </citation>
    <scope>PROTEIN SEQUENCE OF 25-33</scope>
    <source>
        <tissue>Liver</tissue>
    </source>
</reference>
<reference key="11">
    <citation type="journal article" date="1997" name="Electrophoresis">
        <title>Two-dimensional electrophoretic analysis of human breast carcinoma proteins: mapping of proteins that bind to the SH3 domain of mixed lineage kinase MLK2.</title>
        <authorList>
            <person name="Rasmussen R.K."/>
            <person name="Ji H."/>
            <person name="Eddes J.S."/>
            <person name="Moritz R.L."/>
            <person name="Reid G.E."/>
            <person name="Simpson R.J."/>
            <person name="Dorow D.S."/>
        </authorList>
    </citation>
    <scope>PROTEIN SEQUENCE OF 26-42</scope>
    <source>
        <tissue>Mammary carcinoma</tissue>
    </source>
</reference>
<reference key="12">
    <citation type="submission" date="2008-12" db="UniProtKB">
        <authorList>
            <person name="Lubec G."/>
            <person name="Vishwanath V."/>
            <person name="Chen W.-Q."/>
            <person name="Sun Y."/>
        </authorList>
    </citation>
    <scope>PROTEIN SEQUENCE OF 63-73; 95-104; 108-129; 131-140; 259-271; 297-304; 306-329; 336-344; 352-362; 367-397; 434-460 AND 472-482</scope>
    <scope>IDENTIFICATION BY MASS SPECTROMETRY</scope>
    <source>
        <tissue>Brain</tissue>
        <tissue>Cajal-Retzius cell</tissue>
        <tissue>Fetal brain cortex</tissue>
    </source>
</reference>
<reference key="13">
    <citation type="journal article" date="1992" name="Electrophoresis">
        <title>Microsequences of 145 proteins recorded in the two-dimensional gel protein database of normal human epidermal keratinocytes.</title>
        <authorList>
            <person name="Rasmussen H.H."/>
            <person name="van Damme J."/>
            <person name="Puype M."/>
            <person name="Gesser B."/>
            <person name="Celis J.E."/>
            <person name="Vandekerckhove J."/>
        </authorList>
    </citation>
    <scope>PROTEIN SEQUENCE OF 95-104 AND 472-479</scope>
    <source>
        <tissue>Keratinocyte</tissue>
    </source>
</reference>
<reference key="14">
    <citation type="journal article" date="2002" name="Immunity">
        <title>Disulfide bond isomerization and the assembly of MHC class I-peptide complexes.</title>
        <authorList>
            <person name="Dick T.P."/>
            <person name="Bangia N."/>
            <person name="Peaper D.R."/>
            <person name="Cresswell P."/>
        </authorList>
    </citation>
    <scope>FUNCTION</scope>
    <scope>DISULFIDE BOND</scope>
    <scope>ACTIVE SITE</scope>
    <scope>MUTAGENESIS OF CYS-60 AND CYS-409</scope>
</reference>
<reference key="15">
    <citation type="journal article" date="2002" name="Proteomics">
        <title>Cluster analysis of an extensive human breast cancer cell line protein expression map database.</title>
        <authorList>
            <person name="Harris R.A."/>
            <person name="Yang A."/>
            <person name="Stein R.C."/>
            <person name="Lucy K."/>
            <person name="Brusten L."/>
            <person name="Herath A."/>
            <person name="Parekh R."/>
            <person name="Waterfield M.D."/>
            <person name="O'Hare M.J."/>
            <person name="Neville M.A."/>
            <person name="Page M.J."/>
            <person name="Zvelebil M.J."/>
        </authorList>
    </citation>
    <scope>MASS SPECTROMETRY</scope>
    <source>
        <tissue>Mammary cancer</tissue>
    </source>
</reference>
<reference key="16">
    <citation type="journal article" date="2003" name="J. Proteome Res.">
        <title>Proteomic analysis of early melanosomes: identification of novel melanosomal proteins.</title>
        <authorList>
            <person name="Basrur V."/>
            <person name="Yang F."/>
            <person name="Kushimoto T."/>
            <person name="Higashimoto Y."/>
            <person name="Yasumoto K."/>
            <person name="Valencia J."/>
            <person name="Muller J."/>
            <person name="Vieira W.D."/>
            <person name="Watabe H."/>
            <person name="Shabanowitz J."/>
            <person name="Hearing V.J."/>
            <person name="Hunt D.F."/>
            <person name="Appella E."/>
        </authorList>
    </citation>
    <scope>SUBCELLULAR LOCATION [LARGE SCALE ANALYSIS]</scope>
    <source>
        <tissue>Melanoma</tissue>
    </source>
</reference>
<reference key="17">
    <citation type="journal article" date="2005" name="EMBO J.">
        <title>Tapasin and ERp57 form a stable disulfide-linked dimer within the MHC class I peptide-loading complex.</title>
        <authorList>
            <person name="Peaper D.R."/>
            <person name="Wearsch P.A."/>
            <person name="Cresswell P."/>
        </authorList>
    </citation>
    <scope>FUNCTION</scope>
    <scope>DISULFIDE BOND</scope>
    <scope>ACTIVE SITE</scope>
</reference>
<reference key="18">
    <citation type="journal article" date="2006" name="J. Biol. Chem.">
        <title>ERp27, a new non-catalytic endoplasmic reticulum-located human protein disulfide isomerase family member, interacts with ERp57.</title>
        <authorList>
            <person name="Alanen H.I."/>
            <person name="Williamson R.A."/>
            <person name="Howard M.J."/>
            <person name="Hatahet F.S."/>
            <person name="Salo K.E.H."/>
            <person name="Kauppila A."/>
            <person name="Kellokumpu S."/>
            <person name="Ruddock L.W."/>
        </authorList>
    </citation>
    <scope>INTERACTION WITH ERP27</scope>
</reference>
<reference key="19">
    <citation type="journal article" date="2006" name="J. Proteome Res.">
        <title>Proteomic and bioinformatic characterization of the biogenesis and function of melanosomes.</title>
        <authorList>
            <person name="Chi A."/>
            <person name="Valencia J.C."/>
            <person name="Hu Z.-Z."/>
            <person name="Watabe H."/>
            <person name="Yamaguchi H."/>
            <person name="Mangini N.J."/>
            <person name="Huang H."/>
            <person name="Canfield V.A."/>
            <person name="Cheng K.C."/>
            <person name="Yang F."/>
            <person name="Abe R."/>
            <person name="Yamagishi S."/>
            <person name="Shabanowitz J."/>
            <person name="Hearing V.J."/>
            <person name="Wu C."/>
            <person name="Appella E."/>
            <person name="Hunt D.F."/>
        </authorList>
    </citation>
    <scope>SUBCELLULAR LOCATION [LARGE SCALE ANALYSIS]</scope>
    <source>
        <tissue>Melanoma</tissue>
    </source>
</reference>
<reference key="20">
    <citation type="journal article" date="2009" name="Sci. Signal.">
        <title>Quantitative phosphoproteomic analysis of T cell receptor signaling reveals system-wide modulation of protein-protein interactions.</title>
        <authorList>
            <person name="Mayya V."/>
            <person name="Lundgren D.H."/>
            <person name="Hwang S.-I."/>
            <person name="Rezaul K."/>
            <person name="Wu L."/>
            <person name="Eng J.K."/>
            <person name="Rodionov V."/>
            <person name="Han D.K."/>
        </authorList>
    </citation>
    <scope>IDENTIFICATION BY MASS SPECTROMETRY [LARGE SCALE ANALYSIS]</scope>
    <source>
        <tissue>Leukemic T-cell</tissue>
    </source>
</reference>
<reference key="21">
    <citation type="journal article" date="2010" name="Asian J. Androl.">
        <title>Glucose-regulated protein precursor (GRP78) and tumor rejection antigen (GP96) are unique to hamster caput epididymal spermatozoa.</title>
        <authorList>
            <person name="Kameshwari D.B."/>
            <person name="Bhande S."/>
            <person name="Sundaram C.S."/>
            <person name="Kota V."/>
            <person name="Siva A.B."/>
            <person name="Shivaji S."/>
        </authorList>
    </citation>
    <scope>TISSUE SPECIFICITY</scope>
</reference>
<reference key="22">
    <citation type="journal article" date="2011" name="BMC Syst. Biol.">
        <title>Initial characterization of the human central proteome.</title>
        <authorList>
            <person name="Burkard T.R."/>
            <person name="Planyavsky M."/>
            <person name="Kaupe I."/>
            <person name="Breitwieser F.P."/>
            <person name="Buerckstuemmer T."/>
            <person name="Bennett K.L."/>
            <person name="Superti-Furga G."/>
            <person name="Colinge J."/>
        </authorList>
    </citation>
    <scope>IDENTIFICATION BY MASS SPECTROMETRY [LARGE SCALE ANALYSIS]</scope>
</reference>
<reference key="23">
    <citation type="journal article" date="2012" name="J. Proteome Res.">
        <title>Resveratrol-induced changes of the human adipocyte secretion profile.</title>
        <authorList>
            <person name="Rosenow A."/>
            <person name="Noben J.P."/>
            <person name="Jocken J."/>
            <person name="Kallendrusch S."/>
            <person name="Fischer-Posovszky P."/>
            <person name="Mariman E.C."/>
            <person name="Renes J."/>
        </authorList>
    </citation>
    <scope>IDENTIFICATION BY MASS SPECTROMETRY [LARGE SCALE ANALYSIS]</scope>
</reference>
<reference key="24">
    <citation type="journal article" date="2013" name="FEBS Lett.">
        <title>Modulation of H(+),K(+)-ATPase activity by the molecular chaperone ERp57 highly expressed in gastric parietal cells.</title>
        <authorList>
            <person name="Fujii T."/>
            <person name="Awaka S.Y."/>
            <person name="Takahashi Y."/>
            <person name="Fujita K."/>
            <person name="Tsuji H."/>
            <person name="Shimizu T."/>
            <person name="Gomi T."/>
            <person name="Tsukada K."/>
            <person name="Sakai H."/>
        </authorList>
    </citation>
    <scope>TISSUE SPECIFICITY</scope>
</reference>
<reference key="25">
    <citation type="journal article" date="2013" name="PLoS ONE">
        <title>SERPINA2 is a novel gene with a divergent function from SERPINA1.</title>
        <authorList>
            <person name="Marques P.I."/>
            <person name="Ferreira Z."/>
            <person name="Martins M."/>
            <person name="Figueiredo J."/>
            <person name="Silva D.I."/>
            <person name="Castro P."/>
            <person name="Morales-Hojas R."/>
            <person name="Simoes-Correia J."/>
            <person name="Seixas S."/>
        </authorList>
    </citation>
    <scope>INTERACTION WITH SERPINA1 AND SERPINA2</scope>
    <scope>SUBCELLULAR LOCATION</scope>
</reference>
<reference key="26">
    <citation type="journal article" date="2014" name="J. Proteomics">
        <title>An enzyme assisted RP-RPLC approach for in-depth analysis of human liver phosphoproteome.</title>
        <authorList>
            <person name="Bian Y."/>
            <person name="Song C."/>
            <person name="Cheng K."/>
            <person name="Dong M."/>
            <person name="Wang F."/>
            <person name="Huang J."/>
            <person name="Sun D."/>
            <person name="Wang L."/>
            <person name="Ye M."/>
            <person name="Zou H."/>
        </authorList>
    </citation>
    <scope>PHOSPHORYLATION [LARGE SCALE ANALYSIS] AT THR-319</scope>
    <scope>IDENTIFICATION BY MASS SPECTROMETRY [LARGE SCALE ANALYSIS]</scope>
    <source>
        <tissue>Liver</tissue>
    </source>
</reference>
<reference key="27">
    <citation type="journal article" date="2014" name="Mol. Cell. Proteomics">
        <title>Immunoaffinity enrichment and mass spectrometry analysis of protein methylation.</title>
        <authorList>
            <person name="Guo A."/>
            <person name="Gu H."/>
            <person name="Zhou J."/>
            <person name="Mulhern D."/>
            <person name="Wang Y."/>
            <person name="Lee K.A."/>
            <person name="Yang V."/>
            <person name="Aguiar M."/>
            <person name="Kornhauser J."/>
            <person name="Jia X."/>
            <person name="Ren J."/>
            <person name="Beausoleil S.A."/>
            <person name="Silva J.C."/>
            <person name="Vemulapalli V."/>
            <person name="Bedford M.T."/>
            <person name="Comb M.J."/>
        </authorList>
    </citation>
    <scope>METHYLATION [LARGE SCALE ANALYSIS] AT LYS-61</scope>
    <scope>IDENTIFICATION BY MASS SPECTROMETRY [LARGE SCALE ANALYSIS]</scope>
    <source>
        <tissue>Colon carcinoma</tissue>
    </source>
</reference>
<reference key="28">
    <citation type="journal article" date="2015" name="Proteomics">
        <title>N-terminome analysis of the human mitochondrial proteome.</title>
        <authorList>
            <person name="Vaca Jacome A.S."/>
            <person name="Rabilloud T."/>
            <person name="Schaeffer-Reiss C."/>
            <person name="Rompais M."/>
            <person name="Ayoub D."/>
            <person name="Lane L."/>
            <person name="Bairoch A."/>
            <person name="Van Dorsselaer A."/>
            <person name="Carapito C."/>
        </authorList>
    </citation>
    <scope>CLEAVAGE OF SIGNAL PEPTIDE [LARGE SCALE ANALYSIS] AFTER ALA-24</scope>
    <scope>IDENTIFICATION BY MASS SPECTROMETRY [LARGE SCALE ANALYSIS]</scope>
</reference>
<reference key="29">
    <citation type="journal article" date="2016" name="Sci. Rep.">
        <title>Analysis of the interaction of calcitriol with the disulfide isomerase ERp57.</title>
        <authorList>
            <person name="Gaucci E."/>
            <person name="Raimondo D."/>
            <person name="Grillo C."/>
            <person name="Cervoni L."/>
            <person name="Altieri F."/>
            <person name="Nittari G."/>
            <person name="Eufemi M."/>
            <person name="Chichiarelli S."/>
        </authorList>
    </citation>
    <scope>FUNCTION</scope>
    <scope>CATALYTIC ACTIVITY</scope>
    <scope>ACTIVITY REGULATION</scope>
</reference>
<reference key="30">
    <citation type="journal article" date="2005" name="J. Biomol. NMR">
        <title>NMR assignment of the N-terminal domain a of the glycoprotein chaperone ERp57.</title>
        <authorList>
            <person name="Silvennoinen L."/>
            <person name="Koivunen P."/>
            <person name="Myllyharju J."/>
            <person name="Kilpelaeinen I."/>
            <person name="Permi P."/>
        </authorList>
    </citation>
    <scope>STRUCTURE BY NMR OF 25-137</scope>
</reference>
<reference key="31">
    <citation type="submission" date="2006-10" db="PDB data bank">
        <title>The solution structure of the second thioredoxin domain of human protein disulfide-isomerase A3.</title>
        <authorList>
            <consortium name="RIKEN structural genomics initiative (RSGI)"/>
        </authorList>
    </citation>
    <scope>STRUCTURE BY NMR OF 357-485</scope>
</reference>
<reference key="32">
    <citation type="journal article" date="2006" name="Structure">
        <title>Crystal structure of the bb' domains of the protein disulfide isomerase ERp57.</title>
        <authorList>
            <person name="Kozlov G."/>
            <person name="Maattanen P."/>
            <person name="Schrag J.D."/>
            <person name="Pollock S."/>
            <person name="Cygler M."/>
            <person name="Nagar B."/>
            <person name="Thomas D.Y."/>
            <person name="Gehring K."/>
        </authorList>
    </citation>
    <scope>X-RAY CRYSTALLOGRAPHY (2.0 ANGSTROMS) OF 134-376</scope>
    <scope>INTERACTION WITH CANX</scope>
</reference>
<reference key="33">
    <citation type="journal article" date="2009" name="Immunity">
        <title>Insights into MHC class I peptide loading from the structure of the tapasin-ERp57 thiol oxidoreductase heterodimer.</title>
        <authorList>
            <person name="Dong G."/>
            <person name="Wearsch P.A."/>
            <person name="Peaper D.R."/>
            <person name="Cresswell P."/>
            <person name="Reinisch K.M."/>
        </authorList>
    </citation>
    <scope>X-RAY CRYSTALLOGRAPHY (2.6 ANGSTROMS) OF 25-505 IN COMPLEX WITH TAPBP</scope>
    <scope>SUBUNIT</scope>
    <scope>INTERACTION WITH TAPBP</scope>
    <scope>DISULFIDE BONDS</scope>
    <scope>ACTIVE SITE</scope>
</reference>
<reference evidence="29" key="34">
    <citation type="journal article" date="2022" name="Nat. Commun.">
        <title>Molecular basis of MHC I quality control in the peptide loading complex.</title>
        <authorList>
            <person name="Domnick A."/>
            <person name="Winter C."/>
            <person name="Susac L."/>
            <person name="Hennecke L."/>
            <person name="Hensen M."/>
            <person name="Zitzmann N."/>
            <person name="Trowitzsch S."/>
            <person name="Thomas C."/>
            <person name="Tampe R."/>
        </authorList>
    </citation>
    <scope>STRUCTURE BY ELECTRON MICROSCOPY (3.73 ANGSTROMS) OF 25-505 IN MHC CLASS I PEPTIDE LOADING COMPLEX</scope>
    <scope>FUNCTION</scope>
    <scope>SUBUNIT</scope>
    <scope>DISULFIDE BOND</scope>
    <scope>ACTIVE SITE</scope>
</reference>
<reference evidence="28" key="35">
    <citation type="journal article" date="2022" name="Nat. Commun.">
        <title>Structure of an MHC I-tapasin-ERp57 editing complex defines chaperone promiscuity.</title>
        <authorList>
            <person name="Mueller I.K."/>
            <person name="Winter C."/>
            <person name="Thomas C."/>
            <person name="Spaapen R.M."/>
            <person name="Trowitzsch S."/>
            <person name="Tampe R."/>
        </authorList>
    </citation>
    <scope>X-RAY CRYSTALLOGRAPHY (2.70 ANGSTROMS) OF MUTANT ALA-60 IN MHC CLASS I PEPTIDE LOADING COMPLEX</scope>
    <scope>FUNCTION</scope>
    <scope>SUBUNIT</scope>
    <scope>DISULFIDE BOND</scope>
</reference>
<gene>
    <name evidence="26" type="primary">PDIA3</name>
    <name type="synonym">ERP57</name>
    <name type="synonym">ERP60</name>
    <name type="synonym">GRP58</name>
</gene>
<organism>
    <name type="scientific">Homo sapiens</name>
    <name type="common">Human</name>
    <dbReference type="NCBI Taxonomy" id="9606"/>
    <lineage>
        <taxon>Eukaryota</taxon>
        <taxon>Metazoa</taxon>
        <taxon>Chordata</taxon>
        <taxon>Craniata</taxon>
        <taxon>Vertebrata</taxon>
        <taxon>Euteleostomi</taxon>
        <taxon>Mammalia</taxon>
        <taxon>Eutheria</taxon>
        <taxon>Euarchontoglires</taxon>
        <taxon>Primates</taxon>
        <taxon>Haplorrhini</taxon>
        <taxon>Catarrhini</taxon>
        <taxon>Hominidae</taxon>
        <taxon>Homo</taxon>
    </lineage>
</organism>